<reference key="1">
    <citation type="journal article" date="1985" name="Nucleic Acids Res.">
        <title>Structural features and restricted expression of a human alpha-tubulin gene.</title>
        <authorList>
            <person name="Hall J.L."/>
            <person name="Cowan N.J."/>
        </authorList>
    </citation>
    <scope>NUCLEOTIDE SEQUENCE [GENOMIC DNA]</scope>
</reference>
<reference key="2">
    <citation type="journal article" date="2001" name="Bioorg. Med. Chem.">
        <title>Tubulins in the primate retina: evidence that xanthophylls may be endogenous ligands for the paclitaxel-binding site.</title>
        <authorList>
            <person name="Crabtree D.V."/>
            <person name="Ojima I."/>
            <person name="Geng X."/>
            <person name="Adler A.J."/>
        </authorList>
    </citation>
    <scope>NUCLEOTIDE SEQUENCE [MRNA] (ISOFORM 1)</scope>
    <source>
        <tissue>Retina</tissue>
    </source>
</reference>
<reference key="3">
    <citation type="journal article" date="2004" name="Nat. Genet.">
        <title>Complete sequencing and characterization of 21,243 full-length human cDNAs.</title>
        <authorList>
            <person name="Ota T."/>
            <person name="Suzuki Y."/>
            <person name="Nishikawa T."/>
            <person name="Otsuki T."/>
            <person name="Sugiyama T."/>
            <person name="Irie R."/>
            <person name="Wakamatsu A."/>
            <person name="Hayashi K."/>
            <person name="Sato H."/>
            <person name="Nagai K."/>
            <person name="Kimura K."/>
            <person name="Makita H."/>
            <person name="Sekine M."/>
            <person name="Obayashi M."/>
            <person name="Nishi T."/>
            <person name="Shibahara T."/>
            <person name="Tanaka T."/>
            <person name="Ishii S."/>
            <person name="Yamamoto J."/>
            <person name="Saito K."/>
            <person name="Kawai Y."/>
            <person name="Isono Y."/>
            <person name="Nakamura Y."/>
            <person name="Nagahari K."/>
            <person name="Murakami K."/>
            <person name="Yasuda T."/>
            <person name="Iwayanagi T."/>
            <person name="Wagatsuma M."/>
            <person name="Shiratori A."/>
            <person name="Sudo H."/>
            <person name="Hosoiri T."/>
            <person name="Kaku Y."/>
            <person name="Kodaira H."/>
            <person name="Kondo H."/>
            <person name="Sugawara M."/>
            <person name="Takahashi M."/>
            <person name="Kanda K."/>
            <person name="Yokoi T."/>
            <person name="Furuya T."/>
            <person name="Kikkawa E."/>
            <person name="Omura Y."/>
            <person name="Abe K."/>
            <person name="Kamihara K."/>
            <person name="Katsuta N."/>
            <person name="Sato K."/>
            <person name="Tanikawa M."/>
            <person name="Yamazaki M."/>
            <person name="Ninomiya K."/>
            <person name="Ishibashi T."/>
            <person name="Yamashita H."/>
            <person name="Murakawa K."/>
            <person name="Fujimori K."/>
            <person name="Tanai H."/>
            <person name="Kimata M."/>
            <person name="Watanabe M."/>
            <person name="Hiraoka S."/>
            <person name="Chiba Y."/>
            <person name="Ishida S."/>
            <person name="Ono Y."/>
            <person name="Takiguchi S."/>
            <person name="Watanabe S."/>
            <person name="Yosida M."/>
            <person name="Hotuta T."/>
            <person name="Kusano J."/>
            <person name="Kanehori K."/>
            <person name="Takahashi-Fujii A."/>
            <person name="Hara H."/>
            <person name="Tanase T.-O."/>
            <person name="Nomura Y."/>
            <person name="Togiya S."/>
            <person name="Komai F."/>
            <person name="Hara R."/>
            <person name="Takeuchi K."/>
            <person name="Arita M."/>
            <person name="Imose N."/>
            <person name="Musashino K."/>
            <person name="Yuuki H."/>
            <person name="Oshima A."/>
            <person name="Sasaki N."/>
            <person name="Aotsuka S."/>
            <person name="Yoshikawa Y."/>
            <person name="Matsunawa H."/>
            <person name="Ichihara T."/>
            <person name="Shiohata N."/>
            <person name="Sano S."/>
            <person name="Moriya S."/>
            <person name="Momiyama H."/>
            <person name="Satoh N."/>
            <person name="Takami S."/>
            <person name="Terashima Y."/>
            <person name="Suzuki O."/>
            <person name="Nakagawa S."/>
            <person name="Senoh A."/>
            <person name="Mizoguchi H."/>
            <person name="Goto Y."/>
            <person name="Shimizu F."/>
            <person name="Wakebe H."/>
            <person name="Hishigaki H."/>
            <person name="Watanabe T."/>
            <person name="Sugiyama A."/>
            <person name="Takemoto M."/>
            <person name="Kawakami B."/>
            <person name="Yamazaki M."/>
            <person name="Watanabe K."/>
            <person name="Kumagai A."/>
            <person name="Itakura S."/>
            <person name="Fukuzumi Y."/>
            <person name="Fujimori Y."/>
            <person name="Komiyama M."/>
            <person name="Tashiro H."/>
            <person name="Tanigami A."/>
            <person name="Fujiwara T."/>
            <person name="Ono T."/>
            <person name="Yamada K."/>
            <person name="Fujii Y."/>
            <person name="Ozaki K."/>
            <person name="Hirao M."/>
            <person name="Ohmori Y."/>
            <person name="Kawabata A."/>
            <person name="Hikiji T."/>
            <person name="Kobatake N."/>
            <person name="Inagaki H."/>
            <person name="Ikema Y."/>
            <person name="Okamoto S."/>
            <person name="Okitani R."/>
            <person name="Kawakami T."/>
            <person name="Noguchi S."/>
            <person name="Itoh T."/>
            <person name="Shigeta K."/>
            <person name="Senba T."/>
            <person name="Matsumura K."/>
            <person name="Nakajima Y."/>
            <person name="Mizuno T."/>
            <person name="Morinaga M."/>
            <person name="Sasaki M."/>
            <person name="Togashi T."/>
            <person name="Oyama M."/>
            <person name="Hata H."/>
            <person name="Watanabe M."/>
            <person name="Komatsu T."/>
            <person name="Mizushima-Sugano J."/>
            <person name="Satoh T."/>
            <person name="Shirai Y."/>
            <person name="Takahashi Y."/>
            <person name="Nakagawa K."/>
            <person name="Okumura K."/>
            <person name="Nagase T."/>
            <person name="Nomura N."/>
            <person name="Kikuchi H."/>
            <person name="Masuho Y."/>
            <person name="Yamashita R."/>
            <person name="Nakai K."/>
            <person name="Yada T."/>
            <person name="Nakamura Y."/>
            <person name="Ohara O."/>
            <person name="Isogai T."/>
            <person name="Sugano S."/>
        </authorList>
    </citation>
    <scope>NUCLEOTIDE SEQUENCE [LARGE SCALE MRNA] (ISOFORM 1)</scope>
    <source>
        <tissue>Cerebellum</tissue>
    </source>
</reference>
<reference key="4">
    <citation type="journal article" date="2006" name="Nature">
        <title>The finished DNA sequence of human chromosome 12.</title>
        <authorList>
            <person name="Scherer S.E."/>
            <person name="Muzny D.M."/>
            <person name="Buhay C.J."/>
            <person name="Chen R."/>
            <person name="Cree A."/>
            <person name="Ding Y."/>
            <person name="Dugan-Rocha S."/>
            <person name="Gill R."/>
            <person name="Gunaratne P."/>
            <person name="Harris R.A."/>
            <person name="Hawes A.C."/>
            <person name="Hernandez J."/>
            <person name="Hodgson A.V."/>
            <person name="Hume J."/>
            <person name="Jackson A."/>
            <person name="Khan Z.M."/>
            <person name="Kovar-Smith C."/>
            <person name="Lewis L.R."/>
            <person name="Lozado R.J."/>
            <person name="Metzker M.L."/>
            <person name="Milosavljevic A."/>
            <person name="Miner G.R."/>
            <person name="Montgomery K.T."/>
            <person name="Morgan M.B."/>
            <person name="Nazareth L.V."/>
            <person name="Scott G."/>
            <person name="Sodergren E."/>
            <person name="Song X.-Z."/>
            <person name="Steffen D."/>
            <person name="Lovering R.C."/>
            <person name="Wheeler D.A."/>
            <person name="Worley K.C."/>
            <person name="Yuan Y."/>
            <person name="Zhang Z."/>
            <person name="Adams C.Q."/>
            <person name="Ansari-Lari M.A."/>
            <person name="Ayele M."/>
            <person name="Brown M.J."/>
            <person name="Chen G."/>
            <person name="Chen Z."/>
            <person name="Clerc-Blankenburg K.P."/>
            <person name="Davis C."/>
            <person name="Delgado O."/>
            <person name="Dinh H.H."/>
            <person name="Draper H."/>
            <person name="Gonzalez-Garay M.L."/>
            <person name="Havlak P."/>
            <person name="Jackson L.R."/>
            <person name="Jacob L.S."/>
            <person name="Kelly S.H."/>
            <person name="Li L."/>
            <person name="Li Z."/>
            <person name="Liu J."/>
            <person name="Liu W."/>
            <person name="Lu J."/>
            <person name="Maheshwari M."/>
            <person name="Nguyen B.-V."/>
            <person name="Okwuonu G.O."/>
            <person name="Pasternak S."/>
            <person name="Perez L.M."/>
            <person name="Plopper F.J.H."/>
            <person name="Santibanez J."/>
            <person name="Shen H."/>
            <person name="Tabor P.E."/>
            <person name="Verduzco D."/>
            <person name="Waldron L."/>
            <person name="Wang Q."/>
            <person name="Williams G.A."/>
            <person name="Zhang J."/>
            <person name="Zhou J."/>
            <person name="Allen C.C."/>
            <person name="Amin A.G."/>
            <person name="Anyalebechi V."/>
            <person name="Bailey M."/>
            <person name="Barbaria J.A."/>
            <person name="Bimage K.E."/>
            <person name="Bryant N.P."/>
            <person name="Burch P.E."/>
            <person name="Burkett C.E."/>
            <person name="Burrell K.L."/>
            <person name="Calderon E."/>
            <person name="Cardenas V."/>
            <person name="Carter K."/>
            <person name="Casias K."/>
            <person name="Cavazos I."/>
            <person name="Cavazos S.R."/>
            <person name="Ceasar H."/>
            <person name="Chacko J."/>
            <person name="Chan S.N."/>
            <person name="Chavez D."/>
            <person name="Christopoulos C."/>
            <person name="Chu J."/>
            <person name="Cockrell R."/>
            <person name="Cox C.D."/>
            <person name="Dang M."/>
            <person name="Dathorne S.R."/>
            <person name="David R."/>
            <person name="Davis C.M."/>
            <person name="Davy-Carroll L."/>
            <person name="Deshazo D.R."/>
            <person name="Donlin J.E."/>
            <person name="D'Souza L."/>
            <person name="Eaves K.A."/>
            <person name="Egan A."/>
            <person name="Emery-Cohen A.J."/>
            <person name="Escotto M."/>
            <person name="Flagg N."/>
            <person name="Forbes L.D."/>
            <person name="Gabisi A.M."/>
            <person name="Garza M."/>
            <person name="Hamilton C."/>
            <person name="Henderson N."/>
            <person name="Hernandez O."/>
            <person name="Hines S."/>
            <person name="Hogues M.E."/>
            <person name="Huang M."/>
            <person name="Idlebird D.G."/>
            <person name="Johnson R."/>
            <person name="Jolivet A."/>
            <person name="Jones S."/>
            <person name="Kagan R."/>
            <person name="King L.M."/>
            <person name="Leal B."/>
            <person name="Lebow H."/>
            <person name="Lee S."/>
            <person name="LeVan J.M."/>
            <person name="Lewis L.C."/>
            <person name="London P."/>
            <person name="Lorensuhewa L.M."/>
            <person name="Loulseged H."/>
            <person name="Lovett D.A."/>
            <person name="Lucier A."/>
            <person name="Lucier R.L."/>
            <person name="Ma J."/>
            <person name="Madu R.C."/>
            <person name="Mapua P."/>
            <person name="Martindale A.D."/>
            <person name="Martinez E."/>
            <person name="Massey E."/>
            <person name="Mawhiney S."/>
            <person name="Meador M.G."/>
            <person name="Mendez S."/>
            <person name="Mercado C."/>
            <person name="Mercado I.C."/>
            <person name="Merritt C.E."/>
            <person name="Miner Z.L."/>
            <person name="Minja E."/>
            <person name="Mitchell T."/>
            <person name="Mohabbat F."/>
            <person name="Mohabbat K."/>
            <person name="Montgomery B."/>
            <person name="Moore N."/>
            <person name="Morris S."/>
            <person name="Munidasa M."/>
            <person name="Ngo R.N."/>
            <person name="Nguyen N.B."/>
            <person name="Nickerson E."/>
            <person name="Nwaokelemeh O.O."/>
            <person name="Nwokenkwo S."/>
            <person name="Obregon M."/>
            <person name="Oguh M."/>
            <person name="Oragunye N."/>
            <person name="Oviedo R.J."/>
            <person name="Parish B.J."/>
            <person name="Parker D.N."/>
            <person name="Parrish J."/>
            <person name="Parks K.L."/>
            <person name="Paul H.A."/>
            <person name="Payton B.A."/>
            <person name="Perez A."/>
            <person name="Perrin W."/>
            <person name="Pickens A."/>
            <person name="Primus E.L."/>
            <person name="Pu L.-L."/>
            <person name="Puazo M."/>
            <person name="Quiles M.M."/>
            <person name="Quiroz J.B."/>
            <person name="Rabata D."/>
            <person name="Reeves K."/>
            <person name="Ruiz S.J."/>
            <person name="Shao H."/>
            <person name="Sisson I."/>
            <person name="Sonaike T."/>
            <person name="Sorelle R.P."/>
            <person name="Sutton A.E."/>
            <person name="Svatek A.F."/>
            <person name="Svetz L.A."/>
            <person name="Tamerisa K.S."/>
            <person name="Taylor T.R."/>
            <person name="Teague B."/>
            <person name="Thomas N."/>
            <person name="Thorn R.D."/>
            <person name="Trejos Z.Y."/>
            <person name="Trevino B.K."/>
            <person name="Ukegbu O.N."/>
            <person name="Urban J.B."/>
            <person name="Vasquez L.I."/>
            <person name="Vera V.A."/>
            <person name="Villasana D.M."/>
            <person name="Wang L."/>
            <person name="Ward-Moore S."/>
            <person name="Warren J.T."/>
            <person name="Wei X."/>
            <person name="White F."/>
            <person name="Williamson A.L."/>
            <person name="Wleczyk R."/>
            <person name="Wooden H.S."/>
            <person name="Wooden S.H."/>
            <person name="Yen J."/>
            <person name="Yoon L."/>
            <person name="Yoon V."/>
            <person name="Zorrilla S.E."/>
            <person name="Nelson D."/>
            <person name="Kucherlapati R."/>
            <person name="Weinstock G."/>
            <person name="Gibbs R.A."/>
        </authorList>
    </citation>
    <scope>NUCLEOTIDE SEQUENCE [LARGE SCALE GENOMIC DNA]</scope>
</reference>
<reference key="5">
    <citation type="submission" date="2005-07" db="EMBL/GenBank/DDBJ databases">
        <authorList>
            <person name="Mural R.J."/>
            <person name="Istrail S."/>
            <person name="Sutton G.G."/>
            <person name="Florea L."/>
            <person name="Halpern A.L."/>
            <person name="Mobarry C.M."/>
            <person name="Lippert R."/>
            <person name="Walenz B."/>
            <person name="Shatkay H."/>
            <person name="Dew I."/>
            <person name="Miller J.R."/>
            <person name="Flanigan M.J."/>
            <person name="Edwards N.J."/>
            <person name="Bolanos R."/>
            <person name="Fasulo D."/>
            <person name="Halldorsson B.V."/>
            <person name="Hannenhalli S."/>
            <person name="Turner R."/>
            <person name="Yooseph S."/>
            <person name="Lu F."/>
            <person name="Nusskern D.R."/>
            <person name="Shue B.C."/>
            <person name="Zheng X.H."/>
            <person name="Zhong F."/>
            <person name="Delcher A.L."/>
            <person name="Huson D.H."/>
            <person name="Kravitz S.A."/>
            <person name="Mouchard L."/>
            <person name="Reinert K."/>
            <person name="Remington K.A."/>
            <person name="Clark A.G."/>
            <person name="Waterman M.S."/>
            <person name="Eichler E.E."/>
            <person name="Adams M.D."/>
            <person name="Hunkapiller M.W."/>
            <person name="Myers E.W."/>
            <person name="Venter J.C."/>
        </authorList>
    </citation>
    <scope>NUCLEOTIDE SEQUENCE [LARGE SCALE GENOMIC DNA]</scope>
</reference>
<reference key="6">
    <citation type="journal article" date="2004" name="Genome Res.">
        <title>The status, quality, and expansion of the NIH full-length cDNA project: the Mammalian Gene Collection (MGC).</title>
        <authorList>
            <consortium name="The MGC Project Team"/>
        </authorList>
    </citation>
    <scope>NUCLEOTIDE SEQUENCE [LARGE SCALE MRNA] (ISOFORM 1)</scope>
    <source>
        <tissue>Muscle</tissue>
        <tissue>Skin</tissue>
    </source>
</reference>
<reference key="7">
    <citation type="submission" date="2008-12" db="UniProtKB">
        <authorList>
            <person name="Lubec G."/>
            <person name="Afjehi-Sadat L."/>
            <person name="Chen W.-Q."/>
            <person name="Sun Y."/>
        </authorList>
    </citation>
    <scope>PROTEIN SEQUENCE OF 41-60; 65-79; 85-105; 113-121; 157-163; 216-304; 312-320; 327-336; 340-352; 374-390; 395-401 AND 403-430</scope>
    <scope>IDENTIFICATION BY MASS SPECTROMETRY</scope>
    <source>
        <tissue>Brain</tissue>
        <tissue>Cajal-Retzius cell</tissue>
        <tissue>Fetal brain cortex</tissue>
    </source>
</reference>
<reference key="8">
    <citation type="journal article" date="1983" name="Mol. Cell. Biol.">
        <title>Expression of human alpha-tubulin genes: interspecies conservation of 3' untranslated regions.</title>
        <authorList>
            <person name="Cowan N.J."/>
            <person name="Dobner P."/>
            <person name="Fuchs E.V."/>
            <person name="Cleveland D.W."/>
        </authorList>
    </citation>
    <scope>NUCLEOTIDE SEQUENCE [MRNA] OF 110-451</scope>
    <source>
        <tissue>Fetal brain</tissue>
    </source>
</reference>
<reference key="9">
    <citation type="journal article" date="1999" name="Proc. Natl. Acad. Sci. U.S.A.">
        <title>Microtubule dysfunction by posttranslational nitrotyrosination of alpha-tubulin: a nitric oxide-dependent mechanism of cellular injury.</title>
        <authorList>
            <person name="Eiserich J.P."/>
            <person name="Estevez A.G."/>
            <person name="Bamberg T.V."/>
            <person name="Ye Y.Z."/>
            <person name="Chumley P.H."/>
            <person name="Beckman J.S."/>
            <person name="Freeman B.A."/>
        </authorList>
    </citation>
    <scope>PROTEIN SEQUENCE OF 439-451</scope>
    <scope>NITRATION AT TYR-451</scope>
</reference>
<reference key="10">
    <citation type="journal article" date="2007" name="Hum. Mutat.">
        <title>Large spectrum of lissencephaly and pachygyria phenotypes resulting from de novo missense mutations in tubulin alpha 1A (TUBA1A).</title>
        <authorList>
            <person name="Poirier K."/>
            <person name="Keays D.A."/>
            <person name="Francis F."/>
            <person name="Saillour Y."/>
            <person name="Bahi N."/>
            <person name="Manouvrier S."/>
            <person name="Fallet-Bianco C."/>
            <person name="Pasquier L."/>
            <person name="Toutain A."/>
            <person name="Tuy F.P."/>
            <person name="Bienvenu T."/>
            <person name="Joriot S."/>
            <person name="Odent S."/>
            <person name="Ville D."/>
            <person name="Desguerre I."/>
            <person name="Goldenberg A."/>
            <person name="Moutard M.L."/>
            <person name="Fryns J.-P."/>
            <person name="van Esch H."/>
            <person name="Harvey R.J."/>
            <person name="Siebold C."/>
            <person name="Flint J."/>
            <person name="Beldjord C."/>
            <person name="Chelly J."/>
        </authorList>
    </citation>
    <scope>TISSUE SPECIFICITY</scope>
    <scope>VARIANTS LIS3 LEU-188; THR-263; CYS-264; PHE-286; HIS-402; CYS-402 AND LEU-419</scope>
</reference>
<reference key="11">
    <citation type="journal article" date="2009" name="Cell">
        <title>Evolutionary divergence of enzymatic mechanisms for posttranslational polyglycylation.</title>
        <authorList>
            <person name="Rogowski K."/>
            <person name="Juge F."/>
            <person name="van Dijk J."/>
            <person name="Wloga D."/>
            <person name="Strub J.-M."/>
            <person name="Levilliers N."/>
            <person name="Thomas D."/>
            <person name="Bre M.-H."/>
            <person name="Van Dorsselaer A."/>
            <person name="Gaertig J."/>
            <person name="Janke C."/>
        </authorList>
    </citation>
    <scope>GLYCYLATION</scope>
</reference>
<reference key="12">
    <citation type="journal article" date="2014" name="Cell">
        <title>Molecular basis for age-dependent microtubule acetylation by tubulin acetyltransferase.</title>
        <authorList>
            <person name="Szyk A."/>
            <person name="Deaconescu A.M."/>
            <person name="Spector J."/>
            <person name="Goodman B."/>
            <person name="Valenstein M.L."/>
            <person name="Ziolkowska N.E."/>
            <person name="Kormendi V."/>
            <person name="Grigorieff N."/>
            <person name="Roll-Mecak A."/>
        </authorList>
    </citation>
    <scope>ACETYLATION AT LYS-40</scope>
</reference>
<reference key="13">
    <citation type="journal article" date="2015" name="Science">
        <title>Mitosis. Microtubule detyrosination guides chromosomes during mitosis.</title>
        <authorList>
            <person name="Barisic M."/>
            <person name="Silva e Sousa R."/>
            <person name="Tripathy S.K."/>
            <person name="Magiera M.M."/>
            <person name="Zaytsev A.V."/>
            <person name="Pereira A.L."/>
            <person name="Janke C."/>
            <person name="Grishchuk E.L."/>
            <person name="Maiato H."/>
        </authorList>
    </citation>
    <scope>DETYROSINATION</scope>
</reference>
<reference key="14">
    <citation type="journal article" date="2016" name="Cell">
        <title>Graded control of microtubule severing by tubulin glutamylation.</title>
        <authorList>
            <person name="Valenstein M.L."/>
            <person name="Roll-Mecak A."/>
        </authorList>
    </citation>
    <scope>GLUTAMYLATION</scope>
</reference>
<reference key="15">
    <citation type="journal article" date="2016" name="Cell">
        <title>Dual chromatin and cytoskeletal remodeling by SETD2.</title>
        <authorList>
            <person name="Park I.Y."/>
            <person name="Powell R.T."/>
            <person name="Tripathi D.N."/>
            <person name="Dere R."/>
            <person name="Ho T.H."/>
            <person name="Blasius T.L."/>
            <person name="Chiang Y.C."/>
            <person name="Davis I.J."/>
            <person name="Fahey C.C."/>
            <person name="Hacker K.E."/>
            <person name="Verhey K.J."/>
            <person name="Bedford M.T."/>
            <person name="Jonasch E."/>
            <person name="Rathmell W.K."/>
            <person name="Walker C.L."/>
        </authorList>
    </citation>
    <scope>INTERACTION WITH SETD2</scope>
</reference>
<reference key="16">
    <citation type="journal article" date="2016" name="Cell Rep.">
        <title>Alpha-tubulin tyrosination and CLIP-170 phosphorylation regulate the initiation of dynein-driven transport in neurons.</title>
        <authorList>
            <person name="Nirschl J.J."/>
            <person name="Magiera M.M."/>
            <person name="Lazarus J.E."/>
            <person name="Janke C."/>
            <person name="Holzbaur E.L."/>
        </authorList>
    </citation>
    <scope>TYROSINATION</scope>
</reference>
<reference key="17">
    <citation type="journal article" date="2016" name="EMBO J.">
        <title>Tyrosination of alpha-tubulin controls the initiation of processive dynein-dynactin motility.</title>
        <authorList>
            <person name="McKenney R.J."/>
            <person name="Huynh W."/>
            <person name="Vale R.D."/>
            <person name="Sirajuddin M."/>
        </authorList>
    </citation>
    <scope>TYROSINATION</scope>
</reference>
<reference key="18">
    <citation type="journal article" date="2017" name="Science">
        <title>Vasohibins encode tubulin detyrosinating activity.</title>
        <authorList>
            <person name="Nieuwenhuis J."/>
            <person name="Adamopoulos A."/>
            <person name="Bleijerveld O.B."/>
            <person name="Mazouzi A."/>
            <person name="Stickel E."/>
            <person name="Celie P."/>
            <person name="Altelaar M."/>
            <person name="Knipscheer P."/>
            <person name="Perrakis A."/>
            <person name="Blomen V.A."/>
            <person name="Brummelkamp T.R."/>
        </authorList>
    </citation>
    <scope>DETYROSINATION</scope>
</reference>
<reference key="19">
    <citation type="journal article" date="2020" name="Nat. Struct. Mol. Biol.">
        <title>Structural basis for polyglutamate chain initiation and elongation by TTLL family enzymes.</title>
        <authorList>
            <person name="Mahalingan K.K."/>
            <person name="Keith Keenan E."/>
            <person name="Strickland M."/>
            <person name="Li Y."/>
            <person name="Liu Y."/>
            <person name="Ball H.L."/>
            <person name="Tanner M.E."/>
            <person name="Tjandra N."/>
            <person name="Roll-Mecak A."/>
        </authorList>
    </citation>
    <scope>GLUTAMYLATION AT GLU-443</scope>
</reference>
<reference key="20">
    <citation type="journal article" date="2022" name="Science">
        <title>Posttranslational modification of microtubules by the MATCAP detyrosinase.</title>
        <authorList>
            <person name="Landskron L."/>
            <person name="Bak J."/>
            <person name="Adamopoulos A."/>
            <person name="Kaplani K."/>
            <person name="Moraiti M."/>
            <person name="van den Hengel L.G."/>
            <person name="Song J.Y."/>
            <person name="Bleijerveld O.B."/>
            <person name="Nieuwenhuis J."/>
            <person name="Heidebrecht T."/>
            <person name="Henneman L."/>
            <person name="Moutin M.J."/>
            <person name="Barisic M."/>
            <person name="Taraviras S."/>
            <person name="Perrakis A."/>
            <person name="Brummelkamp T.R."/>
        </authorList>
    </citation>
    <scope>DETYROSINATION</scope>
</reference>
<reference evidence="23" key="21">
    <citation type="journal article" date="2022" name="Proc. Natl. Acad. Sci. U.S.A.">
        <title>SPACA9 is a lumenal protein of human ciliary singlet and doublet microtubules.</title>
        <authorList>
            <person name="Gui M."/>
            <person name="Croft J.T."/>
            <person name="Zabeo D."/>
            <person name="Acharya V."/>
            <person name="Kollman J.M."/>
            <person name="Burgoyne T."/>
            <person name="Hoog J.L."/>
            <person name="Brown A."/>
        </authorList>
    </citation>
    <scope>STRUCTURE BY ELECTRON MICROSCOPY (3.60 ANGSTROMS)</scope>
</reference>
<reference key="22">
    <citation type="journal article" date="2015" name="Epilepsia">
        <title>Diagnostic yield of genetic testing in epileptic encephalopathy in childhood.</title>
        <authorList>
            <person name="Mercimek-Mahmutoglu S."/>
            <person name="Patel J."/>
            <person name="Cordeiro D."/>
            <person name="Hewson S."/>
            <person name="Callen D."/>
            <person name="Donner E.J."/>
            <person name="Hahn C.D."/>
            <person name="Kannu P."/>
            <person name="Kobayashi J."/>
            <person name="Minassian B.A."/>
            <person name="Moharir M."/>
            <person name="Siriwardena K."/>
            <person name="Weiss S.K."/>
            <person name="Weksberg R."/>
            <person name="Snead O.C. III"/>
        </authorList>
    </citation>
    <scope>VARIANT LIS3 LEU-402</scope>
</reference>
<gene>
    <name type="primary">TUBA1A</name>
    <name type="synonym">TUBA3</name>
</gene>
<name>TBA1A_HUMAN</name>
<feature type="chain" id="PRO_0000048111" description="Tubulin alpha-1A chain">
    <location>
        <begin position="1"/>
        <end position="451"/>
    </location>
</feature>
<feature type="chain" id="PRO_0000437378" description="Detyrosinated tubulin alpha-1A chain" evidence="21 22">
    <location>
        <begin position="1"/>
        <end position="450"/>
    </location>
</feature>
<feature type="region of interest" description="Disordered" evidence="7">
    <location>
        <begin position="432"/>
        <end position="451"/>
    </location>
</feature>
<feature type="active site" evidence="3">
    <location>
        <position position="254"/>
    </location>
</feature>
<feature type="binding site" evidence="3">
    <location>
        <position position="11"/>
    </location>
    <ligand>
        <name>GTP</name>
        <dbReference type="ChEBI" id="CHEBI:37565"/>
    </ligand>
</feature>
<feature type="binding site" evidence="3">
    <location>
        <position position="71"/>
    </location>
    <ligand>
        <name>GTP</name>
        <dbReference type="ChEBI" id="CHEBI:37565"/>
    </ligand>
</feature>
<feature type="binding site" evidence="3">
    <location>
        <position position="71"/>
    </location>
    <ligand>
        <name>Mg(2+)</name>
        <dbReference type="ChEBI" id="CHEBI:18420"/>
    </ligand>
</feature>
<feature type="binding site" evidence="3">
    <location>
        <position position="140"/>
    </location>
    <ligand>
        <name>GTP</name>
        <dbReference type="ChEBI" id="CHEBI:37565"/>
    </ligand>
</feature>
<feature type="binding site" evidence="3">
    <location>
        <position position="144"/>
    </location>
    <ligand>
        <name>GTP</name>
        <dbReference type="ChEBI" id="CHEBI:37565"/>
    </ligand>
</feature>
<feature type="binding site" evidence="3">
    <location>
        <position position="145"/>
    </location>
    <ligand>
        <name>GTP</name>
        <dbReference type="ChEBI" id="CHEBI:37565"/>
    </ligand>
</feature>
<feature type="binding site" evidence="3">
    <location>
        <position position="179"/>
    </location>
    <ligand>
        <name>GTP</name>
        <dbReference type="ChEBI" id="CHEBI:37565"/>
    </ligand>
</feature>
<feature type="binding site" evidence="3">
    <location>
        <position position="206"/>
    </location>
    <ligand>
        <name>GTP</name>
        <dbReference type="ChEBI" id="CHEBI:37565"/>
    </ligand>
</feature>
<feature type="binding site" evidence="3">
    <location>
        <position position="228"/>
    </location>
    <ligand>
        <name>GTP</name>
        <dbReference type="ChEBI" id="CHEBI:37565"/>
    </ligand>
</feature>
<feature type="site" description="Involved in polymerization" evidence="1">
    <location>
        <position position="451"/>
    </location>
</feature>
<feature type="modified residue" description="N6-acetyllysine" evidence="10">
    <location>
        <position position="40"/>
    </location>
</feature>
<feature type="modified residue" description="3'-nitrotyrosine" evidence="5">
    <location>
        <position position="282"/>
    </location>
</feature>
<feature type="modified residue" description="Phosphoserine" evidence="5">
    <location>
        <position position="439"/>
    </location>
</feature>
<feature type="modified residue" description="5-glutamyl polyglutamate" evidence="17">
    <location>
        <position position="443"/>
    </location>
</feature>
<feature type="modified residue" description="5-glutamyl polyglutamate" evidence="4">
    <location>
        <position position="445"/>
    </location>
</feature>
<feature type="modified residue" description="3'-nitrotyrosine" evidence="8">
    <location>
        <position position="451"/>
    </location>
</feature>
<feature type="splice variant" id="VSP_046782" description="In isoform 2." evidence="19">
    <location>
        <begin position="1"/>
        <end position="35"/>
    </location>
</feature>
<feature type="sequence variant" id="VAR_039332" description="In LIS3; dbSNP:rs137853045." evidence="9">
    <original>I</original>
    <variation>L</variation>
    <location>
        <position position="188"/>
    </location>
</feature>
<feature type="sequence variant" id="VAR_039333" description="In LIS3; dbSNP:rs137853046." evidence="9">
    <original>P</original>
    <variation>T</variation>
    <location>
        <position position="263"/>
    </location>
</feature>
<feature type="sequence variant" id="VAR_039334" description="In LIS3; dbSNP:rs137853043." evidence="9">
    <original>R</original>
    <variation>C</variation>
    <location>
        <position position="264"/>
    </location>
</feature>
<feature type="sequence variant" id="VAR_039335" description="In LIS3." evidence="9">
    <original>L</original>
    <variation>F</variation>
    <location>
        <position position="286"/>
    </location>
</feature>
<feature type="sequence variant" id="VAR_039336" description="In LIS3; dbSNP:rs587784483." evidence="9">
    <original>R</original>
    <variation>C</variation>
    <location>
        <position position="402"/>
    </location>
</feature>
<feature type="sequence variant" id="VAR_039337" description="In LIS3; dbSNP:rs137853044." evidence="9">
    <original>R</original>
    <variation>H</variation>
    <location>
        <position position="402"/>
    </location>
</feature>
<feature type="sequence variant" id="VAR_078711" description="In LIS3; dbSNP:rs137853044." evidence="11">
    <original>R</original>
    <variation>L</variation>
    <location>
        <position position="402"/>
    </location>
</feature>
<feature type="sequence variant" id="VAR_039338" description="In LIS3; dbSNP:rs137853047." evidence="9">
    <original>S</original>
    <variation>L</variation>
    <location>
        <position position="419"/>
    </location>
</feature>
<feature type="sequence variant" id="VAR_034540" description="In dbSNP:rs1065730.">
    <original>E</original>
    <variation>K</variation>
    <location>
        <position position="447"/>
    </location>
</feature>
<feature type="sequence conflict" description="In Ref. 1; CAA25855 and 8; AAA91575." evidence="19" ref="1 8">
    <original>G</original>
    <variation>R</variation>
    <location>
        <position position="131"/>
    </location>
</feature>
<feature type="sequence conflict" description="In Ref. 8; AAA91575." evidence="19" ref="8">
    <original>E</original>
    <variation>D</variation>
    <location>
        <position position="290"/>
    </location>
</feature>
<feature type="sequence conflict" description="In Ref. 1; CAA25855 and 8; AAA91575." evidence="19" ref="1 8">
    <original>R</original>
    <variation>G</variation>
    <location>
        <position position="308"/>
    </location>
</feature>
<feature type="sequence conflict" description="In Ref. 1; CAA25855." evidence="19" ref="1">
    <original>D</original>
    <variation>H</variation>
    <location>
        <position position="438"/>
    </location>
</feature>
<feature type="strand" evidence="25">
    <location>
        <begin position="4"/>
        <end position="9"/>
    </location>
</feature>
<feature type="helix" evidence="25">
    <location>
        <begin position="10"/>
        <end position="28"/>
    </location>
</feature>
<feature type="helix" evidence="25">
    <location>
        <begin position="48"/>
        <end position="51"/>
    </location>
</feature>
<feature type="strand" evidence="25">
    <location>
        <begin position="53"/>
        <end position="55"/>
    </location>
</feature>
<feature type="strand" evidence="25">
    <location>
        <begin position="59"/>
        <end position="63"/>
    </location>
</feature>
<feature type="strand" evidence="25">
    <location>
        <begin position="65"/>
        <end position="71"/>
    </location>
</feature>
<feature type="helix" evidence="25">
    <location>
        <begin position="72"/>
        <end position="78"/>
    </location>
</feature>
<feature type="turn" evidence="25">
    <location>
        <begin position="82"/>
        <end position="86"/>
    </location>
</feature>
<feature type="helix" evidence="25">
    <location>
        <begin position="89"/>
        <end position="91"/>
    </location>
</feature>
<feature type="strand" evidence="25">
    <location>
        <begin position="92"/>
        <end position="94"/>
    </location>
</feature>
<feature type="helix" evidence="25">
    <location>
        <begin position="103"/>
        <end position="107"/>
    </location>
</feature>
<feature type="helix" evidence="25">
    <location>
        <begin position="111"/>
        <end position="128"/>
    </location>
</feature>
<feature type="strand" evidence="25">
    <location>
        <begin position="134"/>
        <end position="143"/>
    </location>
</feature>
<feature type="helix" evidence="25">
    <location>
        <begin position="144"/>
        <end position="160"/>
    </location>
</feature>
<feature type="turn" evidence="25">
    <location>
        <begin position="161"/>
        <end position="163"/>
    </location>
</feature>
<feature type="strand" evidence="25">
    <location>
        <begin position="164"/>
        <end position="171"/>
    </location>
</feature>
<feature type="helix" evidence="25">
    <location>
        <begin position="183"/>
        <end position="196"/>
    </location>
</feature>
<feature type="strand" evidence="25">
    <location>
        <begin position="199"/>
        <end position="204"/>
    </location>
</feature>
<feature type="helix" evidence="25">
    <location>
        <begin position="206"/>
        <end position="215"/>
    </location>
</feature>
<feature type="helix" evidence="25">
    <location>
        <begin position="224"/>
        <end position="238"/>
    </location>
</feature>
<feature type="helix" evidence="25">
    <location>
        <begin position="240"/>
        <end position="243"/>
    </location>
</feature>
<feature type="helix" evidence="25">
    <location>
        <begin position="252"/>
        <end position="257"/>
    </location>
</feature>
<feature type="strand" evidence="25">
    <location>
        <begin position="269"/>
        <end position="273"/>
    </location>
</feature>
<feature type="helix" evidence="25">
    <location>
        <begin position="278"/>
        <end position="281"/>
    </location>
</feature>
<feature type="helix" evidence="25">
    <location>
        <begin position="288"/>
        <end position="295"/>
    </location>
</feature>
<feature type="helix" evidence="25">
    <location>
        <begin position="298"/>
        <end position="300"/>
    </location>
</feature>
<feature type="strand" evidence="25">
    <location>
        <begin position="302"/>
        <end position="304"/>
    </location>
</feature>
<feature type="helix" evidence="25">
    <location>
        <begin position="307"/>
        <end position="309"/>
    </location>
</feature>
<feature type="strand" evidence="25">
    <location>
        <begin position="312"/>
        <end position="322"/>
    </location>
</feature>
<feature type="helix" evidence="25">
    <location>
        <begin position="325"/>
        <end position="337"/>
    </location>
</feature>
<feature type="strand" evidence="24">
    <location>
        <begin position="338"/>
        <end position="340"/>
    </location>
</feature>
<feature type="strand" evidence="25">
    <location>
        <begin position="351"/>
        <end position="358"/>
    </location>
</feature>
<feature type="strand" evidence="24">
    <location>
        <begin position="366"/>
        <end position="368"/>
    </location>
</feature>
<feature type="strand" evidence="25">
    <location>
        <begin position="372"/>
        <end position="381"/>
    </location>
</feature>
<feature type="helix" evidence="25">
    <location>
        <begin position="382"/>
        <end position="384"/>
    </location>
</feature>
<feature type="helix" evidence="25">
    <location>
        <begin position="385"/>
        <end position="399"/>
    </location>
</feature>
<feature type="turn" evidence="25">
    <location>
        <begin position="400"/>
        <end position="404"/>
    </location>
</feature>
<feature type="helix" evidence="25">
    <location>
        <begin position="405"/>
        <end position="409"/>
    </location>
</feature>
<feature type="turn" evidence="25">
    <location>
        <begin position="410"/>
        <end position="412"/>
    </location>
</feature>
<feature type="helix" evidence="25">
    <location>
        <begin position="416"/>
        <end position="435"/>
    </location>
</feature>
<proteinExistence type="evidence at protein level"/>
<sequence>MRECISIHVGQAGVQIGNACWELYCLEHGIQPDGQMPSDKTIGGGDDSFNTFFSETGAGKHVPRAVFVDLEPTVIDEVRTGTYRQLFHPEQLITGKEDAANNYARGHYTIGKEIIDLVLDRIRKLADQCTGLQGFLVFHSFGGGTGSGFTSLLMERLSVDYGKKSKLEFSIYPAPQVSTAVVEPYNSILTTHTTLEHSDCAFMVDNEAIYDICRRNLDIERPTYTNLNRLIGQIVSSITASLRFDGALNVDLTEFQTNLVPYPRIHFPLATYAPVISAEKAYHEQLSVAEITNACFEPANQMVKCDPRHGKYMACCLLYRGDVVPKDVNAAIATIKTKRTIQFVDWCPTGFKVGINYQPPTVVPGGDLAKVQRAVCMLSNTTAIAEAWARLDHKFDLMYAKRAFVHWYVGEGMEEGEFSEAREDMAALEKDYEEVGVDSVEGEGEEEGEEY</sequence>
<dbReference type="EC" id="3.6.5.-" evidence="3"/>
<dbReference type="EMBL" id="X01703">
    <property type="protein sequence ID" value="CAA25855.1"/>
    <property type="molecule type" value="Genomic_DNA"/>
</dbReference>
<dbReference type="EMBL" id="AF141347">
    <property type="protein sequence ID" value="AAD33871.1"/>
    <property type="molecule type" value="mRNA"/>
</dbReference>
<dbReference type="EMBL" id="AK289483">
    <property type="protein sequence ID" value="BAF82172.1"/>
    <property type="molecule type" value="mRNA"/>
</dbReference>
<dbReference type="EMBL" id="AC010173">
    <property type="status" value="NOT_ANNOTATED_CDS"/>
    <property type="molecule type" value="Genomic_DNA"/>
</dbReference>
<dbReference type="EMBL" id="CH471111">
    <property type="protein sequence ID" value="EAW58052.1"/>
    <property type="molecule type" value="Genomic_DNA"/>
</dbReference>
<dbReference type="EMBL" id="CH471111">
    <property type="protein sequence ID" value="EAW58054.1"/>
    <property type="molecule type" value="Genomic_DNA"/>
</dbReference>
<dbReference type="EMBL" id="CH471111">
    <property type="protein sequence ID" value="EAW58055.1"/>
    <property type="molecule type" value="Genomic_DNA"/>
</dbReference>
<dbReference type="EMBL" id="BC006468">
    <property type="protein sequence ID" value="AAH06468.1"/>
    <property type="molecule type" value="mRNA"/>
</dbReference>
<dbReference type="EMBL" id="BC050637">
    <property type="protein sequence ID" value="AAH50637.1"/>
    <property type="molecule type" value="mRNA"/>
</dbReference>
<dbReference type="EMBL" id="K00557">
    <property type="protein sequence ID" value="AAA91575.1"/>
    <property type="molecule type" value="mRNA"/>
</dbReference>
<dbReference type="CCDS" id="CCDS58226.1">
    <molecule id="Q71U36-2"/>
</dbReference>
<dbReference type="CCDS" id="CCDS58227.1">
    <molecule id="Q71U36-1"/>
</dbReference>
<dbReference type="CCDS" id="CCDS8781.1">
    <molecule id="Q71U36-1"/>
</dbReference>
<dbReference type="RefSeq" id="NP_001257328.1">
    <molecule id="Q71U36-1"/>
    <property type="nucleotide sequence ID" value="NM_001270399.2"/>
</dbReference>
<dbReference type="RefSeq" id="NP_001257329.1">
    <molecule id="Q71U36-2"/>
    <property type="nucleotide sequence ID" value="NM_001270400.2"/>
</dbReference>
<dbReference type="RefSeq" id="NP_006000.2">
    <molecule id="Q71U36-1"/>
    <property type="nucleotide sequence ID" value="NM_006009.3"/>
</dbReference>
<dbReference type="PDB" id="5JCO">
    <property type="method" value="EM"/>
    <property type="resolution" value="4.00 A"/>
    <property type="chains" value="A/B/E/F/G/H=1-437"/>
</dbReference>
<dbReference type="PDB" id="6J8F">
    <property type="method" value="X-ray"/>
    <property type="resolution" value="2.28 A"/>
    <property type="chains" value="C=444-451"/>
</dbReference>
<dbReference type="PDB" id="6WSL">
    <property type="method" value="EM"/>
    <property type="resolution" value="3.10 A"/>
    <property type="chains" value="A/E=1-451"/>
</dbReference>
<dbReference type="PDB" id="7C1M">
    <property type="method" value="NMR"/>
    <property type="chains" value="B=440-451"/>
</dbReference>
<dbReference type="PDB" id="7UN1">
    <property type="method" value="EM"/>
    <property type="resolution" value="6.00 A"/>
    <property type="chains" value="AC/AE/BC/BE/BG/CC/CE/CG/DC/DE/DG/EC/EE/EG/FC/FE/FG/GC/GE/GG/HC/HE/HG/IC/IE/IG/JC/JE/JG/KC=1-451"/>
</dbReference>
<dbReference type="PDB" id="7UNG">
    <property type="method" value="EM"/>
    <property type="resolution" value="3.60 A"/>
    <property type="chains" value="AA/AC/AE/AG/AI/AK/AM/BA/BC/BE/BG/BI/BK/BM/CA/CC/CE/CG/CI/CK/CM/DA/DC/DE/DG/DI/DK/DM/EC/EE=1-451"/>
</dbReference>
<dbReference type="PDB" id="8J07">
    <property type="method" value="EM"/>
    <property type="resolution" value="4.10 A"/>
    <property type="chains" value="AC/AE/AG/AI/AK/AM/AO/AQ/AS/AU/AW/AY/AZ/BA/BC/BE/BG/BI/BK/BM/BO/BQ/BS/BU/BW/BY/CC/CE/CG/CI=1-451"/>
</dbReference>
<dbReference type="PDB" id="8SH7">
    <property type="method" value="EM"/>
    <property type="resolution" value="2.80 A"/>
    <property type="chains" value="A=1-451"/>
</dbReference>
<dbReference type="PDBsum" id="5JCO"/>
<dbReference type="PDBsum" id="6J8F"/>
<dbReference type="PDBsum" id="6WSL"/>
<dbReference type="PDBsum" id="7C1M"/>
<dbReference type="PDBsum" id="7UN1"/>
<dbReference type="PDBsum" id="7UNG"/>
<dbReference type="PDBsum" id="8J07"/>
<dbReference type="PDBsum" id="8SH7"/>
<dbReference type="EMDB" id="EMD-21893"/>
<dbReference type="EMDB" id="EMD-26611"/>
<dbReference type="EMDB" id="EMD-26624"/>
<dbReference type="EMDB" id="EMD-35888"/>
<dbReference type="EMDB" id="EMD-40480"/>
<dbReference type="EMDB" id="EMD-8150"/>
<dbReference type="SASBDB" id="Q71U36"/>
<dbReference type="SMR" id="Q71U36"/>
<dbReference type="BioGRID" id="113603">
    <property type="interactions" value="1000"/>
</dbReference>
<dbReference type="CORUM" id="Q71U36"/>
<dbReference type="DIP" id="DIP-32773N"/>
<dbReference type="ELM" id="Q71U36"/>
<dbReference type="FunCoup" id="Q71U36">
    <property type="interactions" value="2496"/>
</dbReference>
<dbReference type="IntAct" id="Q71U36">
    <property type="interactions" value="598"/>
</dbReference>
<dbReference type="MINT" id="Q71U36"/>
<dbReference type="STRING" id="9606.ENSP00000439020"/>
<dbReference type="BindingDB" id="Q71U36"/>
<dbReference type="ChEMBL" id="CHEMBL3661"/>
<dbReference type="DrugBank" id="DB07574">
    <property type="generic name" value="2-MERCAPTO-N-[1,2,3,10-TETRAMETHOXY-9-OXO-5,6,7,9-TETRAHYDRO-BENZO[A]HEPTALEN-7-YL]ACETAMIDE"/>
</dbReference>
<dbReference type="DrugBank" id="DB00518">
    <property type="generic name" value="Albendazole"/>
</dbReference>
<dbReference type="DrugBank" id="DB11638">
    <property type="generic name" value="Artenimol"/>
</dbReference>
<dbReference type="DrugBank" id="DB15534">
    <property type="generic name" value="Colchiceine"/>
</dbReference>
<dbReference type="DrugBank" id="DB05147">
    <property type="generic name" value="CYT997"/>
</dbReference>
<dbReference type="DrugBank" id="DB01873">
    <property type="generic name" value="Epothilone D"/>
</dbReference>
<dbReference type="DrugBank" id="DB00643">
    <property type="generic name" value="Mebendazole"/>
</dbReference>
<dbReference type="DrugBank" id="DB03010">
    <property type="generic name" value="Patupilone"/>
</dbReference>
<dbReference type="DrugBank" id="DB12695">
    <property type="generic name" value="Phenethyl Isothiocyanate"/>
</dbReference>
<dbReference type="DrugBank" id="DB00570">
    <property type="generic name" value="Vinblastine"/>
</dbReference>
<dbReference type="DrugCentral" id="Q71U36"/>
<dbReference type="TCDB" id="8.A.173.1.1">
    <property type="family name" value="the tubulin (tubulin) family"/>
</dbReference>
<dbReference type="GlyGen" id="Q71U36">
    <property type="glycosylation" value="19 sites, 1 N-linked glycan (1 site), 1 O-linked glycan (18 sites)"/>
</dbReference>
<dbReference type="iPTMnet" id="Q71U36"/>
<dbReference type="PhosphoSitePlus" id="Q71U36"/>
<dbReference type="SwissPalm" id="Q71U36"/>
<dbReference type="BioMuta" id="TUBA1A"/>
<dbReference type="DMDM" id="55977864"/>
<dbReference type="jPOST" id="Q71U36"/>
<dbReference type="MassIVE" id="Q71U36"/>
<dbReference type="PaxDb" id="9606-ENSP00000301071"/>
<dbReference type="PeptideAtlas" id="Q71U36"/>
<dbReference type="PRIDE" id="Q71U36"/>
<dbReference type="Pumba" id="Q71U36"/>
<dbReference type="TopDownProteomics" id="Q71U36-1">
    <molecule id="Q71U36-1"/>
</dbReference>
<dbReference type="Antibodypedia" id="3282">
    <property type="antibodies" value="691 antibodies from 40 providers"/>
</dbReference>
<dbReference type="DNASU" id="7846"/>
<dbReference type="Ensembl" id="ENST00000295766.9">
    <molecule id="Q71U36-1"/>
    <property type="protein sequence ID" value="ENSP00000439020.2"/>
    <property type="gene ID" value="ENSG00000167552.16"/>
</dbReference>
<dbReference type="Ensembl" id="ENST00000301071.12">
    <molecule id="Q71U36-1"/>
    <property type="protein sequence ID" value="ENSP00000301071.7"/>
    <property type="gene ID" value="ENSG00000167552.16"/>
</dbReference>
<dbReference type="Ensembl" id="ENST00000547939.6">
    <molecule id="Q71U36-2"/>
    <property type="protein sequence ID" value="ENSP00000450268.2"/>
    <property type="gene ID" value="ENSG00000167552.16"/>
</dbReference>
<dbReference type="Ensembl" id="ENST00000550767.6">
    <molecule id="Q71U36-2"/>
    <property type="protein sequence ID" value="ENSP00000446637.1"/>
    <property type="gene ID" value="ENSG00000167552.16"/>
</dbReference>
<dbReference type="Ensembl" id="ENST00000552924.2">
    <molecule id="Q71U36-2"/>
    <property type="protein sequence ID" value="ENSP00000448725.2"/>
    <property type="gene ID" value="ENSG00000167552.16"/>
</dbReference>
<dbReference type="Ensembl" id="ENST00000715688.1">
    <molecule id="Q71U36-1"/>
    <property type="protein sequence ID" value="ENSP00000520499.1"/>
    <property type="gene ID" value="ENSG00000167552.16"/>
</dbReference>
<dbReference type="GeneID" id="7846"/>
<dbReference type="KEGG" id="hsa:7846"/>
<dbReference type="MANE-Select" id="ENST00000301071.12">
    <property type="protein sequence ID" value="ENSP00000301071.7"/>
    <property type="RefSeq nucleotide sequence ID" value="NM_006009.4"/>
    <property type="RefSeq protein sequence ID" value="NP_006000.2"/>
</dbReference>
<dbReference type="UCSC" id="uc001rtp.5">
    <molecule id="Q71U36-1"/>
    <property type="organism name" value="human"/>
</dbReference>
<dbReference type="AGR" id="HGNC:20766"/>
<dbReference type="CTD" id="7846"/>
<dbReference type="DisGeNET" id="7846"/>
<dbReference type="GeneCards" id="TUBA1A"/>
<dbReference type="GeneReviews" id="TUBA1A"/>
<dbReference type="HGNC" id="HGNC:20766">
    <property type="gene designation" value="TUBA1A"/>
</dbReference>
<dbReference type="HPA" id="ENSG00000167552">
    <property type="expression patterns" value="Tissue enhanced (brain)"/>
</dbReference>
<dbReference type="MalaCards" id="TUBA1A"/>
<dbReference type="MIM" id="602529">
    <property type="type" value="gene"/>
</dbReference>
<dbReference type="MIM" id="611603">
    <property type="type" value="phenotype"/>
</dbReference>
<dbReference type="neXtProt" id="NX_Q71U36"/>
<dbReference type="OpenTargets" id="ENSG00000167552"/>
<dbReference type="Orphanet" id="45358">
    <property type="disease" value="Congenital fibrosis of extraocular muscles"/>
</dbReference>
<dbReference type="Orphanet" id="994">
    <property type="disease" value="Fetal akinesia deformation sequence"/>
</dbReference>
<dbReference type="Orphanet" id="171680">
    <property type="disease" value="Lissencephaly due to TUBA1A mutation"/>
</dbReference>
<dbReference type="Orphanet" id="467166">
    <property type="disease" value="Tubulinopathy-associated dysgyria"/>
</dbReference>
<dbReference type="PharmGKB" id="PA162407319"/>
<dbReference type="VEuPathDB" id="HostDB:ENSG00000167552"/>
<dbReference type="eggNOG" id="KOG1376">
    <property type="taxonomic scope" value="Eukaryota"/>
</dbReference>
<dbReference type="GeneTree" id="ENSGT00950000182825"/>
<dbReference type="HOGENOM" id="CLU_015718_0_0_1"/>
<dbReference type="InParanoid" id="Q71U36"/>
<dbReference type="OMA" id="ESCYDIC"/>
<dbReference type="OrthoDB" id="9540336at2759"/>
<dbReference type="PAN-GO" id="Q71U36">
    <property type="GO annotations" value="6 GO annotations based on evolutionary models"/>
</dbReference>
<dbReference type="PhylomeDB" id="Q71U36"/>
<dbReference type="TreeFam" id="TF300314"/>
<dbReference type="PathwayCommons" id="Q71U36"/>
<dbReference type="Reactome" id="R-HSA-1445148">
    <property type="pathway name" value="Translocation of SLC2A4 (GLUT4) to the plasma membrane"/>
</dbReference>
<dbReference type="Reactome" id="R-HSA-190840">
    <property type="pathway name" value="Microtubule-dependent trafficking of connexons from Golgi to the plasma membrane"/>
</dbReference>
<dbReference type="Reactome" id="R-HSA-190861">
    <property type="pathway name" value="Gap junction assembly"/>
</dbReference>
<dbReference type="Reactome" id="R-HSA-2132295">
    <property type="pathway name" value="MHC class II antigen presentation"/>
</dbReference>
<dbReference type="Reactome" id="R-HSA-2467813">
    <property type="pathway name" value="Separation of Sister Chromatids"/>
</dbReference>
<dbReference type="Reactome" id="R-HSA-2500257">
    <property type="pathway name" value="Resolution of Sister Chromatid Cohesion"/>
</dbReference>
<dbReference type="Reactome" id="R-HSA-2565942">
    <property type="pathway name" value="Regulation of PLK1 Activity at G2/M Transition"/>
</dbReference>
<dbReference type="Reactome" id="R-HSA-3371497">
    <property type="pathway name" value="HSP90 chaperone cycle for steroid hormone receptors (SHR) in the presence of ligand"/>
</dbReference>
<dbReference type="Reactome" id="R-HSA-380259">
    <property type="pathway name" value="Loss of Nlp from mitotic centrosomes"/>
</dbReference>
<dbReference type="Reactome" id="R-HSA-380270">
    <property type="pathway name" value="Recruitment of mitotic centrosome proteins and complexes"/>
</dbReference>
<dbReference type="Reactome" id="R-HSA-380284">
    <property type="pathway name" value="Loss of proteins required for interphase microtubule organization from the centrosome"/>
</dbReference>
<dbReference type="Reactome" id="R-HSA-380320">
    <property type="pathway name" value="Recruitment of NuMA to mitotic centrosomes"/>
</dbReference>
<dbReference type="Reactome" id="R-HSA-389957">
    <property type="pathway name" value="Prefoldin mediated transfer of substrate to CCT/TriC"/>
</dbReference>
<dbReference type="Reactome" id="R-HSA-389960">
    <property type="pathway name" value="Formation of tubulin folding intermediates by CCT/TriC"/>
</dbReference>
<dbReference type="Reactome" id="R-HSA-389977">
    <property type="pathway name" value="Post-chaperonin tubulin folding pathway"/>
</dbReference>
<dbReference type="Reactome" id="R-HSA-437239">
    <property type="pathway name" value="Recycling pathway of L1"/>
</dbReference>
<dbReference type="Reactome" id="R-HSA-5610787">
    <property type="pathway name" value="Hedgehog 'off' state"/>
</dbReference>
<dbReference type="Reactome" id="R-HSA-5617833">
    <property type="pathway name" value="Cilium Assembly"/>
</dbReference>
<dbReference type="Reactome" id="R-HSA-5620912">
    <property type="pathway name" value="Anchoring of the basal body to the plasma membrane"/>
</dbReference>
<dbReference type="Reactome" id="R-HSA-5620924">
    <property type="pathway name" value="Intraflagellar transport"/>
</dbReference>
<dbReference type="Reactome" id="R-HSA-5626467">
    <property type="pathway name" value="RHO GTPases activate IQGAPs"/>
</dbReference>
<dbReference type="Reactome" id="R-HSA-5663220">
    <property type="pathway name" value="RHO GTPases Activate Formins"/>
</dbReference>
<dbReference type="Reactome" id="R-HSA-6807878">
    <property type="pathway name" value="COPI-mediated anterograde transport"/>
</dbReference>
<dbReference type="Reactome" id="R-HSA-6811434">
    <property type="pathway name" value="COPI-dependent Golgi-to-ER retrograde traffic"/>
</dbReference>
<dbReference type="Reactome" id="R-HSA-6811436">
    <property type="pathway name" value="COPI-independent Golgi-to-ER retrograde traffic"/>
</dbReference>
<dbReference type="Reactome" id="R-HSA-68877">
    <property type="pathway name" value="Mitotic Prometaphase"/>
</dbReference>
<dbReference type="Reactome" id="R-HSA-8852276">
    <property type="pathway name" value="The role of GTSE1 in G2/M progression after G2 checkpoint"/>
</dbReference>
<dbReference type="Reactome" id="R-HSA-8854518">
    <property type="pathway name" value="AURKA Activation by TPX2"/>
</dbReference>
<dbReference type="Reactome" id="R-HSA-8955332">
    <property type="pathway name" value="Carboxyterminal post-translational modifications of tubulin"/>
</dbReference>
<dbReference type="Reactome" id="R-HSA-9609690">
    <property type="pathway name" value="HCMV Early Events"/>
</dbReference>
<dbReference type="Reactome" id="R-HSA-9609736">
    <property type="pathway name" value="Assembly and cell surface presentation of NMDA receptors"/>
</dbReference>
<dbReference type="Reactome" id="R-HSA-9619483">
    <property type="pathway name" value="Activation of AMPK downstream of NMDARs"/>
</dbReference>
<dbReference type="Reactome" id="R-HSA-9646399">
    <property type="pathway name" value="Aggrephagy"/>
</dbReference>
<dbReference type="Reactome" id="R-HSA-9648025">
    <property type="pathway name" value="EML4 and NUDC in mitotic spindle formation"/>
</dbReference>
<dbReference type="Reactome" id="R-HSA-9668328">
    <property type="pathway name" value="Sealing of the nuclear envelope (NE) by ESCRT-III"/>
</dbReference>
<dbReference type="Reactome" id="R-HSA-983189">
    <property type="pathway name" value="Kinesins"/>
</dbReference>
<dbReference type="Reactome" id="R-HSA-9833482">
    <property type="pathway name" value="PKR-mediated signaling"/>
</dbReference>
<dbReference type="SignaLink" id="Q71U36"/>
<dbReference type="SIGNOR" id="Q71U36"/>
<dbReference type="BioGRID-ORCS" id="7846">
    <property type="hits" value="183 hits in 1096 CRISPR screens"/>
</dbReference>
<dbReference type="ChiTaRS" id="TUBA1A">
    <property type="organism name" value="human"/>
</dbReference>
<dbReference type="GeneWiki" id="TUBA1A"/>
<dbReference type="GenomeRNAi" id="7846"/>
<dbReference type="Pharos" id="Q71U36">
    <property type="development level" value="Tchem"/>
</dbReference>
<dbReference type="PRO" id="PR:Q71U36"/>
<dbReference type="Proteomes" id="UP000005640">
    <property type="component" value="Chromosome 12"/>
</dbReference>
<dbReference type="RNAct" id="Q71U36">
    <property type="molecule type" value="protein"/>
</dbReference>
<dbReference type="Bgee" id="ENSG00000167552">
    <property type="expression patterns" value="Expressed in endothelial cell and 203 other cell types or tissues"/>
</dbReference>
<dbReference type="ExpressionAtlas" id="Q71U36">
    <property type="expression patterns" value="baseline and differential"/>
</dbReference>
<dbReference type="GO" id="GO:0005879">
    <property type="term" value="C:axonemal microtubule"/>
    <property type="evidence" value="ECO:0000314"/>
    <property type="project" value="UniProtKB"/>
</dbReference>
<dbReference type="GO" id="GO:0005929">
    <property type="term" value="C:cilium"/>
    <property type="evidence" value="ECO:0000314"/>
    <property type="project" value="HPA"/>
</dbReference>
<dbReference type="GO" id="GO:0000793">
    <property type="term" value="C:condensed chromosome"/>
    <property type="evidence" value="ECO:0007669"/>
    <property type="project" value="Ensembl"/>
</dbReference>
<dbReference type="GO" id="GO:0005737">
    <property type="term" value="C:cytoplasm"/>
    <property type="evidence" value="ECO:0000318"/>
    <property type="project" value="GO_Central"/>
</dbReference>
<dbReference type="GO" id="GO:0036464">
    <property type="term" value="C:cytoplasmic ribonucleoprotein granule"/>
    <property type="evidence" value="ECO:0000314"/>
    <property type="project" value="ParkinsonsUK-UCL"/>
</dbReference>
<dbReference type="GO" id="GO:0005829">
    <property type="term" value="C:cytosol"/>
    <property type="evidence" value="ECO:0000304"/>
    <property type="project" value="Reactome"/>
</dbReference>
<dbReference type="GO" id="GO:0070062">
    <property type="term" value="C:extracellular exosome"/>
    <property type="evidence" value="ECO:0007005"/>
    <property type="project" value="UniProtKB"/>
</dbReference>
<dbReference type="GO" id="GO:0005874">
    <property type="term" value="C:microtubule"/>
    <property type="evidence" value="ECO:0000314"/>
    <property type="project" value="UniProtKB"/>
</dbReference>
<dbReference type="GO" id="GO:0015630">
    <property type="term" value="C:microtubule cytoskeleton"/>
    <property type="evidence" value="ECO:0000314"/>
    <property type="project" value="HPA"/>
</dbReference>
<dbReference type="GO" id="GO:0031594">
    <property type="term" value="C:neuromuscular junction"/>
    <property type="evidence" value="ECO:0007669"/>
    <property type="project" value="Ensembl"/>
</dbReference>
<dbReference type="GO" id="GO:0005634">
    <property type="term" value="C:nucleus"/>
    <property type="evidence" value="ECO:0007005"/>
    <property type="project" value="UniProtKB"/>
</dbReference>
<dbReference type="GO" id="GO:0005886">
    <property type="term" value="C:plasma membrane"/>
    <property type="evidence" value="ECO:0007669"/>
    <property type="project" value="Ensembl"/>
</dbReference>
<dbReference type="GO" id="GO:0055037">
    <property type="term" value="C:recycling endosome"/>
    <property type="evidence" value="ECO:0000314"/>
    <property type="project" value="UniProtKB"/>
</dbReference>
<dbReference type="GO" id="GO:0036126">
    <property type="term" value="C:sperm flagellum"/>
    <property type="evidence" value="ECO:0007669"/>
    <property type="project" value="Ensembl"/>
</dbReference>
<dbReference type="GO" id="GO:0005525">
    <property type="term" value="F:GTP binding"/>
    <property type="evidence" value="ECO:0000318"/>
    <property type="project" value="GO_Central"/>
</dbReference>
<dbReference type="GO" id="GO:0016787">
    <property type="term" value="F:hydrolase activity"/>
    <property type="evidence" value="ECO:0007669"/>
    <property type="project" value="UniProtKB-KW"/>
</dbReference>
<dbReference type="GO" id="GO:0042802">
    <property type="term" value="F:identical protein binding"/>
    <property type="evidence" value="ECO:0000353"/>
    <property type="project" value="IntAct"/>
</dbReference>
<dbReference type="GO" id="GO:0046872">
    <property type="term" value="F:metal ion binding"/>
    <property type="evidence" value="ECO:0007669"/>
    <property type="project" value="UniProtKB-KW"/>
</dbReference>
<dbReference type="GO" id="GO:0046982">
    <property type="term" value="F:protein heterodimerization activity"/>
    <property type="evidence" value="ECO:0007669"/>
    <property type="project" value="Ensembl"/>
</dbReference>
<dbReference type="GO" id="GO:0044877">
    <property type="term" value="F:protein-containing complex binding"/>
    <property type="evidence" value="ECO:0007669"/>
    <property type="project" value="Ensembl"/>
</dbReference>
<dbReference type="GO" id="GO:0005200">
    <property type="term" value="F:structural constituent of cytoskeleton"/>
    <property type="evidence" value="ECO:0000318"/>
    <property type="project" value="GO_Central"/>
</dbReference>
<dbReference type="GO" id="GO:0005198">
    <property type="term" value="F:structural molecule activity"/>
    <property type="evidence" value="ECO:0000304"/>
    <property type="project" value="BHF-UCL"/>
</dbReference>
<dbReference type="GO" id="GO:0008344">
    <property type="term" value="P:adult locomotory behavior"/>
    <property type="evidence" value="ECO:0007669"/>
    <property type="project" value="Ensembl"/>
</dbReference>
<dbReference type="GO" id="GO:0051301">
    <property type="term" value="P:cell division"/>
    <property type="evidence" value="ECO:0000304"/>
    <property type="project" value="BHF-UCL"/>
</dbReference>
<dbReference type="GO" id="GO:0071277">
    <property type="term" value="P:cellular response to calcium ion"/>
    <property type="evidence" value="ECO:0007669"/>
    <property type="project" value="Ensembl"/>
</dbReference>
<dbReference type="GO" id="GO:0007098">
    <property type="term" value="P:centrosome cycle"/>
    <property type="evidence" value="ECO:0007669"/>
    <property type="project" value="Ensembl"/>
</dbReference>
<dbReference type="GO" id="GO:0021696">
    <property type="term" value="P:cerebellar cortex morphogenesis"/>
    <property type="evidence" value="ECO:0007669"/>
    <property type="project" value="Ensembl"/>
</dbReference>
<dbReference type="GO" id="GO:0021987">
    <property type="term" value="P:cerebral cortex development"/>
    <property type="evidence" value="ECO:0007669"/>
    <property type="project" value="Ensembl"/>
</dbReference>
<dbReference type="GO" id="GO:0030705">
    <property type="term" value="P:cytoskeleton-dependent intracellular transport"/>
    <property type="evidence" value="ECO:0000304"/>
    <property type="project" value="BHF-UCL"/>
</dbReference>
<dbReference type="GO" id="GO:0021542">
    <property type="term" value="P:dentate gyrus development"/>
    <property type="evidence" value="ECO:0007669"/>
    <property type="project" value="Ensembl"/>
</dbReference>
<dbReference type="GO" id="GO:0030317">
    <property type="term" value="P:flagellated sperm motility"/>
    <property type="evidence" value="ECO:0007669"/>
    <property type="project" value="Ensembl"/>
</dbReference>
<dbReference type="GO" id="GO:0048853">
    <property type="term" value="P:forebrain morphogenesis"/>
    <property type="evidence" value="ECO:0007669"/>
    <property type="project" value="Ensembl"/>
</dbReference>
<dbReference type="GO" id="GO:0010467">
    <property type="term" value="P:gene expression"/>
    <property type="evidence" value="ECO:0007669"/>
    <property type="project" value="Ensembl"/>
</dbReference>
<dbReference type="GO" id="GO:0010001">
    <property type="term" value="P:glial cell differentiation"/>
    <property type="evidence" value="ECO:0007669"/>
    <property type="project" value="Ensembl"/>
</dbReference>
<dbReference type="GO" id="GO:0048873">
    <property type="term" value="P:homeostasis of number of cells within a tissue"/>
    <property type="evidence" value="ECO:0007669"/>
    <property type="project" value="Ensembl"/>
</dbReference>
<dbReference type="GO" id="GO:0006886">
    <property type="term" value="P:intracellular protein transport"/>
    <property type="evidence" value="ECO:0007669"/>
    <property type="project" value="Ensembl"/>
</dbReference>
<dbReference type="GO" id="GO:0035641">
    <property type="term" value="P:locomotory exploration behavior"/>
    <property type="evidence" value="ECO:0007669"/>
    <property type="project" value="Ensembl"/>
</dbReference>
<dbReference type="GO" id="GO:0007613">
    <property type="term" value="P:memory"/>
    <property type="evidence" value="ECO:0007669"/>
    <property type="project" value="Ensembl"/>
</dbReference>
<dbReference type="GO" id="GO:0000226">
    <property type="term" value="P:microtubule cytoskeleton organization"/>
    <property type="evidence" value="ECO:0000318"/>
    <property type="project" value="GO_Central"/>
</dbReference>
<dbReference type="GO" id="GO:0046785">
    <property type="term" value="P:microtubule polymerization"/>
    <property type="evidence" value="ECO:0007669"/>
    <property type="project" value="Ensembl"/>
</dbReference>
<dbReference type="GO" id="GO:0007017">
    <property type="term" value="P:microtubule-based process"/>
    <property type="evidence" value="ECO:0000304"/>
    <property type="project" value="BHF-UCL"/>
</dbReference>
<dbReference type="GO" id="GO:0000278">
    <property type="term" value="P:mitotic cell cycle"/>
    <property type="evidence" value="ECO:0000318"/>
    <property type="project" value="GO_Central"/>
</dbReference>
<dbReference type="GO" id="GO:0061744">
    <property type="term" value="P:motor behavior"/>
    <property type="evidence" value="ECO:0007669"/>
    <property type="project" value="Ensembl"/>
</dbReference>
<dbReference type="GO" id="GO:0051402">
    <property type="term" value="P:neuron apoptotic process"/>
    <property type="evidence" value="ECO:0007669"/>
    <property type="project" value="Ensembl"/>
</dbReference>
<dbReference type="GO" id="GO:0001764">
    <property type="term" value="P:neuron migration"/>
    <property type="evidence" value="ECO:0007669"/>
    <property type="project" value="Ensembl"/>
</dbReference>
<dbReference type="GO" id="GO:0140058">
    <property type="term" value="P:neuron projection arborization"/>
    <property type="evidence" value="ECO:0007669"/>
    <property type="project" value="Ensembl"/>
</dbReference>
<dbReference type="GO" id="GO:0072384">
    <property type="term" value="P:organelle transport along microtubule"/>
    <property type="evidence" value="ECO:0007669"/>
    <property type="project" value="Ensembl"/>
</dbReference>
<dbReference type="GO" id="GO:0021859">
    <property type="term" value="P:pyramidal neuron differentiation"/>
    <property type="evidence" value="ECO:0007669"/>
    <property type="project" value="Ensembl"/>
</dbReference>
<dbReference type="GO" id="GO:0050807">
    <property type="term" value="P:regulation of synapse organization"/>
    <property type="evidence" value="ECO:0007669"/>
    <property type="project" value="Ensembl"/>
</dbReference>
<dbReference type="GO" id="GO:1902065">
    <property type="term" value="P:response to L-glutamate"/>
    <property type="evidence" value="ECO:0007669"/>
    <property type="project" value="Ensembl"/>
</dbReference>
<dbReference type="GO" id="GO:0009612">
    <property type="term" value="P:response to mechanical stimulus"/>
    <property type="evidence" value="ECO:0007669"/>
    <property type="project" value="Ensembl"/>
</dbReference>
<dbReference type="GO" id="GO:0034612">
    <property type="term" value="P:response to tumor necrosis factor"/>
    <property type="evidence" value="ECO:0007669"/>
    <property type="project" value="Ensembl"/>
</dbReference>
<dbReference type="GO" id="GO:0007224">
    <property type="term" value="P:smoothened signaling pathway"/>
    <property type="evidence" value="ECO:0007669"/>
    <property type="project" value="Ensembl"/>
</dbReference>
<dbReference type="GO" id="GO:0001964">
    <property type="term" value="P:startle response"/>
    <property type="evidence" value="ECO:0007669"/>
    <property type="project" value="Ensembl"/>
</dbReference>
<dbReference type="GO" id="GO:0050808">
    <property type="term" value="P:synapse organization"/>
    <property type="evidence" value="ECO:0007669"/>
    <property type="project" value="Ensembl"/>
</dbReference>
<dbReference type="GO" id="GO:0008542">
    <property type="term" value="P:visual learning"/>
    <property type="evidence" value="ECO:0007669"/>
    <property type="project" value="Ensembl"/>
</dbReference>
<dbReference type="CDD" id="cd02186">
    <property type="entry name" value="alpha_tubulin"/>
    <property type="match status" value="1"/>
</dbReference>
<dbReference type="FunFam" id="1.10.287.600:FF:000005">
    <property type="entry name" value="Tubulin alpha chain"/>
    <property type="match status" value="1"/>
</dbReference>
<dbReference type="FunFam" id="3.30.1330.20:FF:000001">
    <property type="entry name" value="Tubulin alpha chain"/>
    <property type="match status" value="1"/>
</dbReference>
<dbReference type="FunFam" id="3.40.50.1440:FF:000002">
    <property type="entry name" value="Tubulin alpha chain"/>
    <property type="match status" value="1"/>
</dbReference>
<dbReference type="Gene3D" id="1.10.287.600">
    <property type="entry name" value="Helix hairpin bin"/>
    <property type="match status" value="1"/>
</dbReference>
<dbReference type="Gene3D" id="3.30.1330.20">
    <property type="entry name" value="Tubulin/FtsZ, C-terminal domain"/>
    <property type="match status" value="1"/>
</dbReference>
<dbReference type="Gene3D" id="3.40.50.1440">
    <property type="entry name" value="Tubulin/FtsZ, GTPase domain"/>
    <property type="match status" value="1"/>
</dbReference>
<dbReference type="InterPro" id="IPR002452">
    <property type="entry name" value="Alpha_tubulin"/>
</dbReference>
<dbReference type="InterPro" id="IPR008280">
    <property type="entry name" value="Tub_FtsZ_C"/>
</dbReference>
<dbReference type="InterPro" id="IPR000217">
    <property type="entry name" value="Tubulin"/>
</dbReference>
<dbReference type="InterPro" id="IPR037103">
    <property type="entry name" value="Tubulin/FtsZ-like_C"/>
</dbReference>
<dbReference type="InterPro" id="IPR018316">
    <property type="entry name" value="Tubulin/FtsZ_2-layer-sand-dom"/>
</dbReference>
<dbReference type="InterPro" id="IPR036525">
    <property type="entry name" value="Tubulin/FtsZ_GTPase_sf"/>
</dbReference>
<dbReference type="InterPro" id="IPR023123">
    <property type="entry name" value="Tubulin_C"/>
</dbReference>
<dbReference type="InterPro" id="IPR017975">
    <property type="entry name" value="Tubulin_CS"/>
</dbReference>
<dbReference type="InterPro" id="IPR003008">
    <property type="entry name" value="Tubulin_FtsZ_GTPase"/>
</dbReference>
<dbReference type="PANTHER" id="PTHR11588">
    <property type="entry name" value="TUBULIN"/>
    <property type="match status" value="1"/>
</dbReference>
<dbReference type="Pfam" id="PF00091">
    <property type="entry name" value="Tubulin"/>
    <property type="match status" value="1"/>
</dbReference>
<dbReference type="Pfam" id="PF03953">
    <property type="entry name" value="Tubulin_C"/>
    <property type="match status" value="1"/>
</dbReference>
<dbReference type="PRINTS" id="PR01162">
    <property type="entry name" value="ALPHATUBULIN"/>
</dbReference>
<dbReference type="PRINTS" id="PR01161">
    <property type="entry name" value="TUBULIN"/>
</dbReference>
<dbReference type="SMART" id="SM00864">
    <property type="entry name" value="Tubulin"/>
    <property type="match status" value="1"/>
</dbReference>
<dbReference type="SMART" id="SM00865">
    <property type="entry name" value="Tubulin_C"/>
    <property type="match status" value="1"/>
</dbReference>
<dbReference type="SUPFAM" id="SSF55307">
    <property type="entry name" value="Tubulin C-terminal domain-like"/>
    <property type="match status" value="1"/>
</dbReference>
<dbReference type="SUPFAM" id="SSF52490">
    <property type="entry name" value="Tubulin nucleotide-binding domain-like"/>
    <property type="match status" value="1"/>
</dbReference>
<dbReference type="PROSITE" id="PS00227">
    <property type="entry name" value="TUBULIN"/>
    <property type="match status" value="1"/>
</dbReference>
<accession>Q71U36</accession>
<accession>A8K0B8</accession>
<accession>G3V1U9</accession>
<accession>P04687</accession>
<accession>P05209</accession>
<keyword id="KW-0002">3D-structure</keyword>
<keyword id="KW-0007">Acetylation</keyword>
<keyword id="KW-0025">Alternative splicing</keyword>
<keyword id="KW-0966">Cell projection</keyword>
<keyword id="KW-0969">Cilium</keyword>
<keyword id="KW-0963">Cytoplasm</keyword>
<keyword id="KW-0206">Cytoskeleton</keyword>
<keyword id="KW-0903">Direct protein sequencing</keyword>
<keyword id="KW-0225">Disease variant</keyword>
<keyword id="KW-0282">Flagellum</keyword>
<keyword id="KW-0342">GTP-binding</keyword>
<keyword id="KW-0378">Hydrolase</keyword>
<keyword id="KW-1017">Isopeptide bond</keyword>
<keyword id="KW-0451">Lissencephaly</keyword>
<keyword id="KW-0460">Magnesium</keyword>
<keyword id="KW-0479">Metal-binding</keyword>
<keyword id="KW-0488">Methylation</keyword>
<keyword id="KW-0493">Microtubule</keyword>
<keyword id="KW-0944">Nitration</keyword>
<keyword id="KW-0547">Nucleotide-binding</keyword>
<keyword id="KW-0597">Phosphoprotein</keyword>
<keyword id="KW-1185">Reference proteome</keyword>
<protein>
    <recommendedName>
        <fullName>Tubulin alpha-1A chain</fullName>
        <ecNumber evidence="3">3.6.5.-</ecNumber>
    </recommendedName>
    <alternativeName>
        <fullName>Alpha-tubulin 3</fullName>
    </alternativeName>
    <alternativeName>
        <fullName>Tubulin B-alpha-1</fullName>
    </alternativeName>
    <alternativeName>
        <fullName>Tubulin alpha-3 chain</fullName>
    </alternativeName>
    <component>
        <recommendedName>
            <fullName>Detyrosinated tubulin alpha-1A chain</fullName>
        </recommendedName>
    </component>
</protein>
<organism>
    <name type="scientific">Homo sapiens</name>
    <name type="common">Human</name>
    <dbReference type="NCBI Taxonomy" id="9606"/>
    <lineage>
        <taxon>Eukaryota</taxon>
        <taxon>Metazoa</taxon>
        <taxon>Chordata</taxon>
        <taxon>Craniata</taxon>
        <taxon>Vertebrata</taxon>
        <taxon>Euteleostomi</taxon>
        <taxon>Mammalia</taxon>
        <taxon>Eutheria</taxon>
        <taxon>Euarchontoglires</taxon>
        <taxon>Primates</taxon>
        <taxon>Haplorrhini</taxon>
        <taxon>Catarrhini</taxon>
        <taxon>Hominidae</taxon>
        <taxon>Homo</taxon>
    </lineage>
</organism>
<comment type="function">
    <text>Tubulin is the major constituent of microtubules, a cylinder consisting of laterally associated linear protofilaments composed of alpha- and beta-tubulin heterodimers. Microtubules grow by the addition of GTP-tubulin dimers to the microtubule end, where a stabilizing cap forms. Below the cap, tubulin dimers are in GDP-bound state, owing to GTPase activity of alpha-tubulin.</text>
</comment>
<comment type="catalytic activity">
    <reaction evidence="3">
        <text>GTP + H2O = GDP + phosphate + H(+)</text>
        <dbReference type="Rhea" id="RHEA:19669"/>
        <dbReference type="ChEBI" id="CHEBI:15377"/>
        <dbReference type="ChEBI" id="CHEBI:15378"/>
        <dbReference type="ChEBI" id="CHEBI:37565"/>
        <dbReference type="ChEBI" id="CHEBI:43474"/>
        <dbReference type="ChEBI" id="CHEBI:58189"/>
    </reaction>
    <physiologicalReaction direction="left-to-right" evidence="3">
        <dbReference type="Rhea" id="RHEA:19670"/>
    </physiologicalReaction>
</comment>
<comment type="cofactor">
    <cofactor evidence="3">
        <name>Mg(2+)</name>
        <dbReference type="ChEBI" id="CHEBI:18420"/>
    </cofactor>
</comment>
<comment type="subunit">
    <text evidence="4">Dimer of alpha and beta chains. A typical microtubule is a hollow water-filled tube with an outer diameter of 25 nm and an inner diameter of 15 nM. Alpha-beta heterodimers associate head-to-tail to form protofilaments running lengthwise along the microtubule wall with the beta-tubulin subunit facing the microtubule plus end conferring a structural polarity. Microtubules usually have 13 protofilaments but different protofilament numbers can be found in some organisms and specialized cells. Component of sperm flagellar doublet microtubules (By similarity).</text>
</comment>
<comment type="interaction">
    <interactant intactId="EBI-302552">
        <id>Q71U36</id>
    </interactant>
    <interactant intactId="EBI-77613">
        <id>P05067</id>
        <label>APP</label>
    </interactant>
    <organismsDiffer>false</organismsDiffer>
    <experiments>3</experiments>
</comment>
<comment type="interaction">
    <interactant intactId="EBI-302552">
        <id>Q71U36</id>
    </interactant>
    <interactant intactId="EBI-6479976">
        <id>P30622-2</id>
        <label>CLIP1</label>
    </interactant>
    <organismsDiffer>false</organismsDiffer>
    <experiments>3</experiments>
</comment>
<comment type="interaction">
    <interactant intactId="EBI-302552">
        <id>Q71U36</id>
    </interactant>
    <interactant intactId="EBI-2117940">
        <id>Q9NQC7</id>
        <label>CYLD</label>
    </interactant>
    <organismsDiffer>false</organismsDiffer>
    <experiments>6</experiments>
</comment>
<comment type="interaction">
    <interactant intactId="EBI-302552">
        <id>Q71U36</id>
    </interactant>
    <interactant intactId="EBI-297353">
        <id>P00533</id>
        <label>EGFR</label>
    </interactant>
    <organismsDiffer>false</organismsDiffer>
    <experiments>4</experiments>
</comment>
<comment type="interaction">
    <interactant intactId="EBI-302552">
        <id>Q71U36</id>
    </interactant>
    <interactant intactId="EBI-466029">
        <id>P42858</id>
        <label>HTT</label>
    </interactant>
    <organismsDiffer>false</organismsDiffer>
    <experiments>3</experiments>
</comment>
<comment type="interaction">
    <interactant intactId="EBI-302552">
        <id>Q71U36</id>
    </interactant>
    <interactant intactId="EBI-852823">
        <id>P05412</id>
        <label>JUN</label>
    </interactant>
    <organismsDiffer>false</organismsDiffer>
    <experiments>3</experiments>
</comment>
<comment type="interaction">
    <interactant intactId="EBI-302552">
        <id>Q71U36</id>
    </interactant>
    <interactant intactId="EBI-366233">
        <id>P10636-8</id>
        <label>MAPT</label>
    </interactant>
    <organismsDiffer>false</organismsDiffer>
    <experiments>7</experiments>
</comment>
<comment type="interaction">
    <interactant intactId="EBI-302552">
        <id>Q71U36</id>
    </interactant>
    <interactant intactId="EBI-302552">
        <id>Q71U36</id>
        <label>TUBA1A</label>
    </interactant>
    <organismsDiffer>false</organismsDiffer>
    <experiments>5</experiments>
</comment>
<comment type="interaction">
    <interactant intactId="EBI-302552">
        <id>Q71U36</id>
    </interactant>
    <interactant intactId="EBI-350864">
        <id>P07437</id>
        <label>TUBB</label>
    </interactant>
    <organismsDiffer>false</organismsDiffer>
    <experiments>5</experiments>
</comment>
<comment type="subcellular location">
    <subcellularLocation>
        <location>Cytoplasm</location>
        <location>Cytoskeleton</location>
    </subcellularLocation>
    <subcellularLocation>
        <location evidence="4">Cytoplasm</location>
        <location evidence="4">Cytoskeleton</location>
        <location evidence="4">Flagellum axoneme</location>
    </subcellularLocation>
</comment>
<comment type="alternative products">
    <event type="alternative splicing"/>
    <isoform>
        <id>Q71U36-1</id>
        <name>1</name>
        <sequence type="displayed"/>
    </isoform>
    <isoform>
        <id>Q71U36-2</id>
        <name>2</name>
        <sequence type="described" ref="VSP_046782"/>
    </isoform>
</comment>
<comment type="tissue specificity">
    <text evidence="9">Expressed at a high level in fetal brain.</text>
</comment>
<comment type="PTM">
    <text evidence="6 13">Some glutamate residues at the C-terminus are polyglutamylated, resulting in polyglutamate chains on the gamma-carboxyl group (PubMed:26875866). Polyglutamylation plays a key role in microtubule severing by spastin (SPAST). SPAST preferentially recognizes and acts on microtubules decorated with short polyglutamate tails: severing activity by SPAST increases as the number of glutamates per tubulin rises from one to eight, but decreases beyond this glutamylation threshold (PubMed:26875866). Glutamylation is also involved in cilia motility (By similarity).</text>
</comment>
<comment type="PTM">
    <text evidence="2 20">Some glutamate residues at the C-terminus are monoglycylated but not polyglycylated due to the absence of functional TTLL10 in human. Monoglycylation is mainly limited to tubulin incorporated into cilia and flagella axonemes, which is required for their stability and maintenance. Flagella glycylation controls sperm motility. Both polyglutamylation and monoglycylation can coexist on the same protein on adjacent residues, and lowering glycylation levels increases polyglutamylation, and reciprocally.</text>
</comment>
<comment type="PTM">
    <text evidence="10">Acetylation of alpha chains at Lys-40 is located inside the microtubule lumen. This modification has been correlated with increased microtubule stability, intracellular transport and ciliary assembly.</text>
</comment>
<comment type="PTM">
    <text evidence="3">Methylation of alpha chains at Lys-40 is found in mitotic microtubules and is required for normal mitosis and cytokinesis contributing to genomic stability.</text>
</comment>
<comment type="PTM">
    <text evidence="8">Nitration of Tyr-451 is irreversible and interferes with normal dynein intracellular distribution.</text>
</comment>
<comment type="PTM">
    <text evidence="12 14 15 16 18">Undergoes a tyrosination/detyrosination cycle, the cyclic removal and re-addition of a C-terminal tyrosine residue by the enzymes tubulin tyrosine carboxypeptidase (MATCAP1/KIAA0895L, VASH1 or VASH2) and tubulin tyrosine ligase (TTL), respectively.</text>
</comment>
<comment type="PTM">
    <molecule>Tubulin alpha-1A chain</molecule>
    <text evidence="14 15">Tyrosination promotes microtubule interaction with CAP-Gly domain-containing proteins such as CLIP1, CLIP2 and DCTN1. Tyrosination regulates the initiation of dynein-dynactin motility via interaction with DCTN1, which brings the dynein-dynactin complex into contact with microtubules (PubMed:26968983, PubMed:26972003). In neurons, tyrosinated tubulins mediate the initiation of retrograde vesicle transport (PubMed:26968983).</text>
</comment>
<comment type="PTM">
    <molecule>Detyrosinated tubulin alpha-1A chain</molecule>
    <text evidence="4 12">Detyrosination is involved in metaphase plate congression by guiding chromosomes during mitosis: detyrosination promotes interaction with CENPE, promoting pole-proximal transport of chromosomes toward the equator (PubMed:25908662). Detyrosination increases microtubules-dependent mechanotransduction in dystrophic cardiac and skeletal muscle. In cardiomyocytes, detyrosinated microtubules are required to resist to contractile compression during contraction: detyrosination promotes association with desmin (DES) at force-generating sarcomeres, leading to buckled microtubules and mechanical resistance to contraction (By similarity).</text>
</comment>
<comment type="disease" evidence="9 11">
    <disease id="DI-00672">
        <name>Lissencephaly 3</name>
        <acronym>LIS3</acronym>
        <description>A classic type lissencephaly associated with psychomotor retardation and seizures. Features include agyria or pachygyria or laminar heterotopia, severe intellectual disability, motor delay, variable presence of seizures, and abnormalities of corpus callosum, hippocampus, cerebellar vermis and brainstem.</description>
        <dbReference type="MIM" id="611603"/>
    </disease>
    <text>The disease is caused by variants affecting the gene represented in this entry.</text>
</comment>
<comment type="similarity">
    <text evidence="19">Belongs to the tubulin family.</text>
</comment>
<evidence type="ECO:0000250" key="1"/>
<evidence type="ECO:0000250" key="2">
    <source>
        <dbReference type="UniProtKB" id="P07437"/>
    </source>
</evidence>
<evidence type="ECO:0000250" key="3">
    <source>
        <dbReference type="UniProtKB" id="P68363"/>
    </source>
</evidence>
<evidence type="ECO:0000250" key="4">
    <source>
        <dbReference type="UniProtKB" id="P68369"/>
    </source>
</evidence>
<evidence type="ECO:0000250" key="5">
    <source>
        <dbReference type="UniProtKB" id="P68373"/>
    </source>
</evidence>
<evidence type="ECO:0000250" key="6">
    <source>
        <dbReference type="UniProtKB" id="P99024"/>
    </source>
</evidence>
<evidence type="ECO:0000256" key="7">
    <source>
        <dbReference type="SAM" id="MobiDB-lite"/>
    </source>
</evidence>
<evidence type="ECO:0000269" key="8">
    <source>
    </source>
</evidence>
<evidence type="ECO:0000269" key="9">
    <source>
    </source>
</evidence>
<evidence type="ECO:0000269" key="10">
    <source>
    </source>
</evidence>
<evidence type="ECO:0000269" key="11">
    <source>
    </source>
</evidence>
<evidence type="ECO:0000269" key="12">
    <source>
    </source>
</evidence>
<evidence type="ECO:0000269" key="13">
    <source>
    </source>
</evidence>
<evidence type="ECO:0000269" key="14">
    <source>
    </source>
</evidence>
<evidence type="ECO:0000269" key="15">
    <source>
    </source>
</evidence>
<evidence type="ECO:0000269" key="16">
    <source>
    </source>
</evidence>
<evidence type="ECO:0000269" key="17">
    <source>
    </source>
</evidence>
<evidence type="ECO:0000269" key="18">
    <source>
    </source>
</evidence>
<evidence type="ECO:0000305" key="19"/>
<evidence type="ECO:0000305" key="20">
    <source>
    </source>
</evidence>
<evidence type="ECO:0000305" key="21">
    <source>
    </source>
</evidence>
<evidence type="ECO:0000305" key="22">
    <source>
    </source>
</evidence>
<evidence type="ECO:0007744" key="23">
    <source>
        <dbReference type="PDB" id="7UNG"/>
    </source>
</evidence>
<evidence type="ECO:0007829" key="24">
    <source>
        <dbReference type="PDB" id="6WSL"/>
    </source>
</evidence>
<evidence type="ECO:0007829" key="25">
    <source>
        <dbReference type="PDB" id="8SH7"/>
    </source>
</evidence>